<keyword id="KW-0002">3D-structure</keyword>
<keyword id="KW-0165">Cleavage on pair of basic residues</keyword>
<keyword id="KW-0202">Cytokine</keyword>
<keyword id="KW-0225">Disease variant</keyword>
<keyword id="KW-1015">Disulfide bond</keyword>
<keyword id="KW-0325">Glycoprotein</keyword>
<keyword id="KW-0339">Growth factor</keyword>
<keyword id="KW-1267">Proteomics identification</keyword>
<keyword id="KW-1185">Reference proteome</keyword>
<keyword id="KW-0964">Secreted</keyword>
<keyword id="KW-0732">Signal</keyword>
<gene>
    <name type="primary">GDF11</name>
    <name evidence="7" type="synonym">BMP11</name>
</gene>
<sequence>MVLAAPLLLGFLLLALELRPRGEAAEGPAAAAAAAAAAAAAGVGGERSSRPAPSVAPEPDGCPVCVWRQHSRELRLESIKSQILSKLRLKEAPNISREVVKQLLPKAPPLQQILDLHDFQGDALQPEDFLEEDEYHATTETVISMAQETDPAVQTDGSPLCCHFHFSPKVMFTKVLKAQLWVYLRPVPRPATVYLQILRLKPLTGEGTAGGGGGGRRHIRIRSLKIELHSRSGHWQSIDFKQVLHSWFRQPQSNWGIEINAFDPSGTDLAVTSLGPGAEGLHPFMELRVLENTKRSRRNLGLDCDEHSSESRCCRYPLTVDFEAFGWDWIIAPKRYKANYCSGQCEYMFMQKYPHTHLVQQANPRGSAGPCCTPTKMSPINMLYFNDKQQIIYGKIPGMVVDRCGCS</sequence>
<accession>O95390</accession>
<accession>Q9UID1</accession>
<accession>Q9UID2</accession>
<name>GDF11_HUMAN</name>
<organism>
    <name type="scientific">Homo sapiens</name>
    <name type="common">Human</name>
    <dbReference type="NCBI Taxonomy" id="9606"/>
    <lineage>
        <taxon>Eukaryota</taxon>
        <taxon>Metazoa</taxon>
        <taxon>Chordata</taxon>
        <taxon>Craniata</taxon>
        <taxon>Vertebrata</taxon>
        <taxon>Euteleostomi</taxon>
        <taxon>Mammalia</taxon>
        <taxon>Eutheria</taxon>
        <taxon>Euarchontoglires</taxon>
        <taxon>Primates</taxon>
        <taxon>Haplorrhini</taxon>
        <taxon>Catarrhini</taxon>
        <taxon>Hominidae</taxon>
        <taxon>Homo</taxon>
    </lineage>
</organism>
<protein>
    <recommendedName>
        <fullName evidence="8">Growth/differentiation factor 11</fullName>
        <shortName>GDF-11</shortName>
    </recommendedName>
    <alternativeName>
        <fullName evidence="7">Bone morphogenetic protein 11</fullName>
        <shortName>BMP-11</shortName>
    </alternativeName>
</protein>
<comment type="function">
    <text evidence="2 5 6">Secreted signal that acts globally to regulate anterior/posterior axial patterning during development. May play critical roles in patterning both mesodermal and neural tissues (By similarity). It is required for proper vertebral patterning and orofacial development (PubMed:31215115). Signals through activin receptors type-2, ACVR2A and ACVR2B, and activin receptors type-1, ACVR1B, ACVR1C and TGFBR1 leading to the phosphorylation of SMAD2 and SMAD3 (PubMed:28257634).</text>
</comment>
<comment type="subunit">
    <text evidence="2 4 5 6">Homodimer; disulfide-linked (PubMed:26919518, PubMed:31215115). Interacts directly with ACVR2B (By similarity). Interacts directly with ACVR2A (By similarity). Interacts with ACVR1B, TGFBR1 and ACVR1C in an ACVR2B-dependent manner (By similarity). Interacts with FST isoform 2/FS-288 (PubMed:28257634).</text>
</comment>
<comment type="interaction">
    <interactant intactId="EBI-2363776">
        <id>O95390</id>
    </interactant>
    <interactant intactId="EBI-1383577">
        <id>Q13705</id>
        <label>ACVR2B</label>
    </interactant>
    <organismsDiffer>false</organismsDiffer>
    <experiments>3</experiments>
</comment>
<comment type="subcellular location">
    <subcellularLocation>
        <location evidence="9">Secreted</location>
    </subcellularLocation>
</comment>
<comment type="tissue specificity">
    <text evidence="6">In the embryo, strong expression is seen in the palatal epithelia, including the medial edge epithelial and midline epithelial seam of the palatal shelves. Less pronounced expression is also seen throughout the palatal shelf and tongue mesenchyme.</text>
</comment>
<comment type="PTM">
    <text evidence="2 6">Synthesized as large precursor molecule that undergoes proteolytic cleavage by furin-like proteases (PubMed:31215115). This produces an inactive form consisting of the mature C-terminal portion non-covalently bound to its cleaved N-terminal propeptide. Activation of the mature form requires additional cleavage of the propeptide by a tolloid-like metalloproteinase.</text>
</comment>
<comment type="disease" evidence="6">
    <disease id="DI-05988">
        <name>Vertebral hypersegmentation and orofacial anomalies</name>
        <acronym>VHO</acronym>
        <description>An autosomal dominant disease characterized by supernumerary ribs, supernumerary cervical, thoracic and/or lumbar vertebrae, and orofacial anomalies such as cleft lip with or without cleft palate in most patients.</description>
        <dbReference type="MIM" id="619122"/>
    </disease>
    <text>The disease may be caused by variants affecting the gene represented in this entry.</text>
</comment>
<comment type="similarity">
    <text evidence="9">Belongs to the TGF-beta family.</text>
</comment>
<feature type="signal peptide" evidence="3">
    <location>
        <begin position="1"/>
        <end position="24"/>
    </location>
</feature>
<feature type="propeptide" id="PRO_0000033986" evidence="1">
    <location>
        <begin position="25"/>
        <end position="298"/>
    </location>
</feature>
<feature type="chain" id="PRO_0000033987" description="Growth/differentiation factor 11">
    <location>
        <begin position="299"/>
        <end position="407"/>
    </location>
</feature>
<feature type="site" description="Cleavage; by BMP1" evidence="2">
    <location>
        <begin position="121"/>
        <end position="122"/>
    </location>
</feature>
<feature type="site" description="Cleavage; by FURIN" evidence="6">
    <location>
        <position position="298"/>
    </location>
</feature>
<feature type="glycosylation site" description="N-linked (GlcNAc...) asparagine" evidence="3">
    <location>
        <position position="94"/>
    </location>
</feature>
<feature type="disulfide bond" evidence="4 5 10 11 12">
    <location>
        <begin position="304"/>
        <end position="314"/>
    </location>
</feature>
<feature type="disulfide bond" evidence="4 5 10 11 12">
    <location>
        <begin position="313"/>
        <end position="372"/>
    </location>
</feature>
<feature type="disulfide bond" evidence="4 5 10 11 12">
    <location>
        <begin position="341"/>
        <end position="404"/>
    </location>
</feature>
<feature type="disulfide bond" evidence="4 5 10 11 12">
    <location>
        <begin position="345"/>
        <end position="406"/>
    </location>
</feature>
<feature type="disulfide bond" description="Interchain" evidence="4 5 10 11 12">
    <location>
        <position position="371"/>
    </location>
</feature>
<feature type="sequence variant" id="VAR_085163" description="In VHO; loss of proteolytic cleavage of N-terminal propeptide; markedly reduced function in the activation of SMAD protein signal transduction; dbSNP:rs1878258280." evidence="6">
    <original>R</original>
    <variation>Q</variation>
    <location>
        <position position="298"/>
    </location>
</feature>
<feature type="strand" evidence="14">
    <location>
        <begin position="301"/>
        <end position="304"/>
    </location>
</feature>
<feature type="strand" evidence="16">
    <location>
        <begin position="306"/>
        <end position="308"/>
    </location>
</feature>
<feature type="strand" evidence="13">
    <location>
        <begin position="312"/>
        <end position="316"/>
    </location>
</feature>
<feature type="strand" evidence="13">
    <location>
        <begin position="319"/>
        <end position="321"/>
    </location>
</feature>
<feature type="turn" evidence="13">
    <location>
        <begin position="322"/>
        <end position="326"/>
    </location>
</feature>
<feature type="strand" evidence="13">
    <location>
        <begin position="330"/>
        <end position="332"/>
    </location>
</feature>
<feature type="strand" evidence="13">
    <location>
        <begin position="334"/>
        <end position="337"/>
    </location>
</feature>
<feature type="strand" evidence="13">
    <location>
        <begin position="340"/>
        <end position="342"/>
    </location>
</feature>
<feature type="turn" evidence="13">
    <location>
        <begin position="347"/>
        <end position="350"/>
    </location>
</feature>
<feature type="helix" evidence="13">
    <location>
        <begin position="355"/>
        <end position="362"/>
    </location>
</feature>
<feature type="strand" evidence="15">
    <location>
        <begin position="365"/>
        <end position="367"/>
    </location>
</feature>
<feature type="strand" evidence="13">
    <location>
        <begin position="371"/>
        <end position="385"/>
    </location>
</feature>
<feature type="strand" evidence="13">
    <location>
        <begin position="387"/>
        <end position="389"/>
    </location>
</feature>
<feature type="strand" evidence="13">
    <location>
        <begin position="391"/>
        <end position="407"/>
    </location>
</feature>
<dbReference type="EMBL" id="AF100907">
    <property type="protein sequence ID" value="AAC72852.1"/>
    <property type="molecule type" value="mRNA"/>
</dbReference>
<dbReference type="EMBL" id="AF028333">
    <property type="protein sequence ID" value="AAF21630.1"/>
    <property type="molecule type" value="mRNA"/>
</dbReference>
<dbReference type="EMBL" id="AF028334">
    <property type="protein sequence ID" value="AAF21631.1"/>
    <property type="molecule type" value="Genomic_DNA"/>
</dbReference>
<dbReference type="CCDS" id="CCDS8891.1"/>
<dbReference type="RefSeq" id="NP_005802.1">
    <property type="nucleotide sequence ID" value="NM_005811.5"/>
</dbReference>
<dbReference type="RefSeq" id="XP_006719257.1">
    <property type="nucleotide sequence ID" value="XM_006719194.4"/>
</dbReference>
<dbReference type="RefSeq" id="XP_054226739.1">
    <property type="nucleotide sequence ID" value="XM_054370764.1"/>
</dbReference>
<dbReference type="PDB" id="5E4G">
    <property type="method" value="X-ray"/>
    <property type="resolution" value="1.50 A"/>
    <property type="chains" value="A=299-407"/>
</dbReference>
<dbReference type="PDB" id="5JHW">
    <property type="method" value="X-ray"/>
    <property type="resolution" value="2.35 A"/>
    <property type="chains" value="A/B=299-407"/>
</dbReference>
<dbReference type="PDB" id="5UHM">
    <property type="method" value="X-ray"/>
    <property type="resolution" value="1.90 A"/>
    <property type="chains" value="A/B=299-407"/>
</dbReference>
<dbReference type="PDB" id="6MAC">
    <property type="method" value="X-ray"/>
    <property type="resolution" value="2.34 A"/>
    <property type="chains" value="A=300-407"/>
</dbReference>
<dbReference type="PDB" id="7MRZ">
    <property type="method" value="X-ray"/>
    <property type="resolution" value="3.00 A"/>
    <property type="chains" value="A=299-407"/>
</dbReference>
<dbReference type="PDBsum" id="5E4G"/>
<dbReference type="PDBsum" id="5JHW"/>
<dbReference type="PDBsum" id="5UHM"/>
<dbReference type="PDBsum" id="6MAC"/>
<dbReference type="PDBsum" id="7MRZ"/>
<dbReference type="SMR" id="O95390"/>
<dbReference type="BioGRID" id="115515">
    <property type="interactions" value="72"/>
</dbReference>
<dbReference type="CORUM" id="O95390"/>
<dbReference type="FunCoup" id="O95390">
    <property type="interactions" value="594"/>
</dbReference>
<dbReference type="IntAct" id="O95390">
    <property type="interactions" value="46"/>
</dbReference>
<dbReference type="MINT" id="O95390"/>
<dbReference type="STRING" id="9606.ENSP00000257868"/>
<dbReference type="DrugBank" id="DB12118">
    <property type="generic name" value="Sotatercept"/>
</dbReference>
<dbReference type="DrugCentral" id="O95390"/>
<dbReference type="GlyCosmos" id="O95390">
    <property type="glycosylation" value="1 site, No reported glycans"/>
</dbReference>
<dbReference type="GlyGen" id="O95390">
    <property type="glycosylation" value="2 sites, 1 N-linked glycan (1 site), 1 O-linked glycan (1 site)"/>
</dbReference>
<dbReference type="iPTMnet" id="O95390"/>
<dbReference type="PhosphoSitePlus" id="O95390"/>
<dbReference type="BioMuta" id="GDF11"/>
<dbReference type="MassIVE" id="O95390"/>
<dbReference type="PaxDb" id="9606-ENSP00000257868"/>
<dbReference type="PeptideAtlas" id="O95390"/>
<dbReference type="ProteomicsDB" id="50842"/>
<dbReference type="Antibodypedia" id="27725">
    <property type="antibodies" value="304 antibodies from 34 providers"/>
</dbReference>
<dbReference type="DNASU" id="10220"/>
<dbReference type="Ensembl" id="ENST00000257868.10">
    <property type="protein sequence ID" value="ENSP00000257868.5"/>
    <property type="gene ID" value="ENSG00000135414.10"/>
</dbReference>
<dbReference type="GeneID" id="10220"/>
<dbReference type="KEGG" id="hsa:10220"/>
<dbReference type="MANE-Select" id="ENST00000257868.10">
    <property type="protein sequence ID" value="ENSP00000257868.5"/>
    <property type="RefSeq nucleotide sequence ID" value="NM_005811.5"/>
    <property type="RefSeq protein sequence ID" value="NP_005802.1"/>
</dbReference>
<dbReference type="UCSC" id="uc001shq.4">
    <property type="organism name" value="human"/>
</dbReference>
<dbReference type="AGR" id="HGNC:4216"/>
<dbReference type="CTD" id="10220"/>
<dbReference type="DisGeNET" id="10220"/>
<dbReference type="GeneCards" id="GDF11"/>
<dbReference type="HGNC" id="HGNC:4216">
    <property type="gene designation" value="GDF11"/>
</dbReference>
<dbReference type="HPA" id="ENSG00000135414">
    <property type="expression patterns" value="Tissue enhanced (retina)"/>
</dbReference>
<dbReference type="MalaCards" id="GDF11"/>
<dbReference type="MIM" id="603936">
    <property type="type" value="gene"/>
</dbReference>
<dbReference type="MIM" id="619122">
    <property type="type" value="phenotype"/>
</dbReference>
<dbReference type="neXtProt" id="NX_O95390"/>
<dbReference type="OpenTargets" id="ENSG00000135414"/>
<dbReference type="PharmGKB" id="PA28631"/>
<dbReference type="VEuPathDB" id="HostDB:ENSG00000135414"/>
<dbReference type="eggNOG" id="KOG3900">
    <property type="taxonomic scope" value="Eukaryota"/>
</dbReference>
<dbReference type="GeneTree" id="ENSGT00940000161052"/>
<dbReference type="InParanoid" id="O95390"/>
<dbReference type="OMA" id="QADAPFE"/>
<dbReference type="OrthoDB" id="5948587at2759"/>
<dbReference type="PAN-GO" id="O95390">
    <property type="GO annotations" value="4 GO annotations based on evolutionary models"/>
</dbReference>
<dbReference type="PhylomeDB" id="O95390"/>
<dbReference type="TreeFam" id="TF318514"/>
<dbReference type="PathwayCommons" id="O95390"/>
<dbReference type="SignaLink" id="O95390"/>
<dbReference type="SIGNOR" id="O95390"/>
<dbReference type="BioGRID-ORCS" id="10220">
    <property type="hits" value="18 hits in 1163 CRISPR screens"/>
</dbReference>
<dbReference type="ChiTaRS" id="GDF11">
    <property type="organism name" value="human"/>
</dbReference>
<dbReference type="GeneWiki" id="GDF11"/>
<dbReference type="GenomeRNAi" id="10220"/>
<dbReference type="Pharos" id="O95390">
    <property type="development level" value="Tclin"/>
</dbReference>
<dbReference type="PRO" id="PR:O95390"/>
<dbReference type="Proteomes" id="UP000005640">
    <property type="component" value="Chromosome 12"/>
</dbReference>
<dbReference type="RNAct" id="O95390">
    <property type="molecule type" value="protein"/>
</dbReference>
<dbReference type="Bgee" id="ENSG00000135414">
    <property type="expression patterns" value="Expressed in pigmented layer of retina and 171 other cell types or tissues"/>
</dbReference>
<dbReference type="ExpressionAtlas" id="O95390">
    <property type="expression patterns" value="baseline and differential"/>
</dbReference>
<dbReference type="GO" id="GO:0005615">
    <property type="term" value="C:extracellular space"/>
    <property type="evidence" value="ECO:0000318"/>
    <property type="project" value="GO_Central"/>
</dbReference>
<dbReference type="GO" id="GO:0032991">
    <property type="term" value="C:protein-containing complex"/>
    <property type="evidence" value="ECO:0000314"/>
    <property type="project" value="MGI"/>
</dbReference>
<dbReference type="GO" id="GO:0005125">
    <property type="term" value="F:cytokine activity"/>
    <property type="evidence" value="ECO:0000318"/>
    <property type="project" value="GO_Central"/>
</dbReference>
<dbReference type="GO" id="GO:0008083">
    <property type="term" value="F:growth factor activity"/>
    <property type="evidence" value="ECO:0007669"/>
    <property type="project" value="UniProtKB-KW"/>
</dbReference>
<dbReference type="GO" id="GO:0032924">
    <property type="term" value="P:activin receptor signaling pathway"/>
    <property type="evidence" value="ECO:0000315"/>
    <property type="project" value="GO_Central"/>
</dbReference>
<dbReference type="GO" id="GO:0035881">
    <property type="term" value="P:amacrine cell differentiation"/>
    <property type="evidence" value="ECO:0007669"/>
    <property type="project" value="Ensembl"/>
</dbReference>
<dbReference type="GO" id="GO:0048593">
    <property type="term" value="P:camera-type eye morphogenesis"/>
    <property type="evidence" value="ECO:0007669"/>
    <property type="project" value="Ensembl"/>
</dbReference>
<dbReference type="GO" id="GO:0008283">
    <property type="term" value="P:cell population proliferation"/>
    <property type="evidence" value="ECO:0007669"/>
    <property type="project" value="Ensembl"/>
</dbReference>
<dbReference type="GO" id="GO:0007498">
    <property type="term" value="P:mesoderm development"/>
    <property type="evidence" value="ECO:0000304"/>
    <property type="project" value="UniProtKB"/>
</dbReference>
<dbReference type="GO" id="GO:0001656">
    <property type="term" value="P:metanephros development"/>
    <property type="evidence" value="ECO:0007669"/>
    <property type="project" value="Ensembl"/>
</dbReference>
<dbReference type="GO" id="GO:1902870">
    <property type="term" value="P:negative regulation of amacrine cell differentiation"/>
    <property type="evidence" value="ECO:0007669"/>
    <property type="project" value="Ensembl"/>
</dbReference>
<dbReference type="GO" id="GO:0008285">
    <property type="term" value="P:negative regulation of cell population proliferation"/>
    <property type="evidence" value="ECO:0007669"/>
    <property type="project" value="Ensembl"/>
</dbReference>
<dbReference type="GO" id="GO:0007399">
    <property type="term" value="P:nervous system development"/>
    <property type="evidence" value="ECO:0000304"/>
    <property type="project" value="UniProtKB"/>
</dbReference>
<dbReference type="GO" id="GO:0060391">
    <property type="term" value="P:positive regulation of SMAD protein signal transduction"/>
    <property type="evidence" value="ECO:0000315"/>
    <property type="project" value="UniProtKB"/>
</dbReference>
<dbReference type="GO" id="GO:0060021">
    <property type="term" value="P:roof of mouth development"/>
    <property type="evidence" value="ECO:0007669"/>
    <property type="project" value="Ensembl"/>
</dbReference>
<dbReference type="GO" id="GO:0001501">
    <property type="term" value="P:skeletal system development"/>
    <property type="evidence" value="ECO:0000304"/>
    <property type="project" value="UniProtKB"/>
</dbReference>
<dbReference type="GO" id="GO:0021512">
    <property type="term" value="P:spinal cord anterior/posterior patterning"/>
    <property type="evidence" value="ECO:0007669"/>
    <property type="project" value="Ensembl"/>
</dbReference>
<dbReference type="GO" id="GO:0072560">
    <property type="term" value="P:type B pancreatic cell maturation"/>
    <property type="evidence" value="ECO:0007669"/>
    <property type="project" value="Ensembl"/>
</dbReference>
<dbReference type="GO" id="GO:0001657">
    <property type="term" value="P:ureteric bud development"/>
    <property type="evidence" value="ECO:0007669"/>
    <property type="project" value="Ensembl"/>
</dbReference>
<dbReference type="CDD" id="cd19388">
    <property type="entry name" value="TGF_beta_GDF8"/>
    <property type="match status" value="1"/>
</dbReference>
<dbReference type="FunFam" id="2.60.120.970:FF:000003">
    <property type="entry name" value="Growth differentiation factor 11"/>
    <property type="match status" value="1"/>
</dbReference>
<dbReference type="FunFam" id="2.10.90.10:FF:000006">
    <property type="entry name" value="growth/differentiation factor 8"/>
    <property type="match status" value="1"/>
</dbReference>
<dbReference type="Gene3D" id="2.60.120.970">
    <property type="match status" value="1"/>
</dbReference>
<dbReference type="Gene3D" id="2.10.90.10">
    <property type="entry name" value="Cystine-knot cytokines"/>
    <property type="match status" value="1"/>
</dbReference>
<dbReference type="InterPro" id="IPR029034">
    <property type="entry name" value="Cystine-knot_cytokine"/>
</dbReference>
<dbReference type="InterPro" id="IPR001839">
    <property type="entry name" value="TGF-b_C"/>
</dbReference>
<dbReference type="InterPro" id="IPR001111">
    <property type="entry name" value="TGF-b_propeptide"/>
</dbReference>
<dbReference type="InterPro" id="IPR015615">
    <property type="entry name" value="TGF-beta-rel"/>
</dbReference>
<dbReference type="InterPro" id="IPR017948">
    <property type="entry name" value="TGFb_CS"/>
</dbReference>
<dbReference type="PANTHER" id="PTHR11848:SF166">
    <property type="entry name" value="GROWTH_DIFFERENTIATION FACTOR 11"/>
    <property type="match status" value="1"/>
</dbReference>
<dbReference type="PANTHER" id="PTHR11848">
    <property type="entry name" value="TGF-BETA FAMILY"/>
    <property type="match status" value="1"/>
</dbReference>
<dbReference type="Pfam" id="PF00019">
    <property type="entry name" value="TGF_beta"/>
    <property type="match status" value="1"/>
</dbReference>
<dbReference type="Pfam" id="PF00688">
    <property type="entry name" value="TGFb_propeptide"/>
    <property type="match status" value="1"/>
</dbReference>
<dbReference type="SMART" id="SM00204">
    <property type="entry name" value="TGFB"/>
    <property type="match status" value="1"/>
</dbReference>
<dbReference type="SUPFAM" id="SSF57501">
    <property type="entry name" value="Cystine-knot cytokines"/>
    <property type="match status" value="1"/>
</dbReference>
<dbReference type="PROSITE" id="PS00250">
    <property type="entry name" value="TGF_BETA_1"/>
    <property type="match status" value="1"/>
</dbReference>
<dbReference type="PROSITE" id="PS51362">
    <property type="entry name" value="TGF_BETA_2"/>
    <property type="match status" value="1"/>
</dbReference>
<evidence type="ECO:0000250" key="1"/>
<evidence type="ECO:0000250" key="2">
    <source>
        <dbReference type="UniProtKB" id="Q9Z1W4"/>
    </source>
</evidence>
<evidence type="ECO:0000255" key="3"/>
<evidence type="ECO:0000269" key="4">
    <source>
    </source>
</evidence>
<evidence type="ECO:0000269" key="5">
    <source>
    </source>
</evidence>
<evidence type="ECO:0000269" key="6">
    <source>
    </source>
</evidence>
<evidence type="ECO:0000303" key="7">
    <source>
    </source>
</evidence>
<evidence type="ECO:0000303" key="8">
    <source>
    </source>
</evidence>
<evidence type="ECO:0000305" key="9"/>
<evidence type="ECO:0007744" key="10">
    <source>
        <dbReference type="PDB" id="5E4G"/>
    </source>
</evidence>
<evidence type="ECO:0007744" key="11">
    <source>
        <dbReference type="PDB" id="5JHW"/>
    </source>
</evidence>
<evidence type="ECO:0007744" key="12">
    <source>
        <dbReference type="PDB" id="5UHM"/>
    </source>
</evidence>
<evidence type="ECO:0007829" key="13">
    <source>
        <dbReference type="PDB" id="5E4G"/>
    </source>
</evidence>
<evidence type="ECO:0007829" key="14">
    <source>
        <dbReference type="PDB" id="5UHM"/>
    </source>
</evidence>
<evidence type="ECO:0007829" key="15">
    <source>
        <dbReference type="PDB" id="6MAC"/>
    </source>
</evidence>
<evidence type="ECO:0007829" key="16">
    <source>
        <dbReference type="PDB" id="7MRZ"/>
    </source>
</evidence>
<reference key="1">
    <citation type="journal article" date="1999" name="Dev. Biol.">
        <title>A novel BMP expressed in developing mouse limb, spinal cord, and tail bud is a potent mesoderm inducer in Xenopus embryos.</title>
        <authorList>
            <person name="Gamer L.W."/>
            <person name="Wolfman N.M."/>
            <person name="Celeste A.J."/>
            <person name="Hattersley G."/>
            <person name="Hewick R."/>
            <person name="Rosen V."/>
        </authorList>
    </citation>
    <scope>NUCLEOTIDE SEQUENCE [MRNA]</scope>
    <source>
        <tissue>Fetal brain</tissue>
    </source>
</reference>
<reference key="2">
    <citation type="journal article" date="1999" name="Nat. Genet.">
        <title>Regulation of anterior/posterior patterning of the axial skeleton by growth/differentiation factor 11.</title>
        <authorList>
            <person name="McPherron A.C."/>
            <person name="Lawler A.M."/>
            <person name="Lee S.-J."/>
        </authorList>
    </citation>
    <scope>NUCLEOTIDE SEQUENCE [GENOMIC DNA / MRNA]</scope>
</reference>
<reference key="3">
    <citation type="journal article" date="2019" name="Hum. Mutat.">
        <title>Mutations in GDF11 and the extracellular antagonist, Follistatin, as a likely cause of Mendelian forms of orofacial clefting in humans.</title>
        <authorList>
            <person name="Cox T.C."/>
            <person name="Lidral A.C."/>
            <person name="McCoy J.C."/>
            <person name="Liu H."/>
            <person name="Cox L.L."/>
            <person name="Zhu Y."/>
            <person name="Anderson R.D."/>
            <person name="Moreno Uribe L.M."/>
            <person name="Anand D."/>
            <person name="Deng M."/>
            <person name="Richter C.T."/>
            <person name="Nidey N.L."/>
            <person name="Standley J.M."/>
            <person name="Blue E.E."/>
            <person name="Chong J.X."/>
            <person name="Smith J.D."/>
            <person name="Kirk E.P."/>
            <person name="Venselaar H."/>
            <person name="Krahn K.N."/>
            <person name="van Bokhoven H."/>
            <person name="Zhou H."/>
            <person name="Cornell R.A."/>
            <person name="Glass I.A."/>
            <person name="Bamshad M.J."/>
            <person name="Nickerson D.A."/>
            <person name="Murray J.C."/>
            <person name="Lachke S.A."/>
            <person name="Thompson T.B."/>
            <person name="Buckley M.F."/>
            <person name="Roscioli T."/>
        </authorList>
    </citation>
    <scope>FUNCTION</scope>
    <scope>TISSUE SPECIFICITY</scope>
    <scope>SUBUNIT</scope>
    <scope>PROTEOLYTIC CLEAVAGE AT ARG-298</scope>
    <scope>VARIANT VHO GLN-298</scope>
    <scope>CHARACTERIZATION OF VARIANT VHO GLN-298</scope>
    <scope>INVOLVEMENT IN VHO</scope>
</reference>
<reference evidence="10" key="4">
    <citation type="journal article" date="2016" name="Acta Crystallogr. F">
        <title>Crystal structure of human GDF11.</title>
        <authorList>
            <person name="Padyana A.K."/>
            <person name="Vaidialingam B."/>
            <person name="Hayes D.B."/>
            <person name="Gupta P."/>
            <person name="Franti M."/>
            <person name="Farrow N.A."/>
        </authorList>
    </citation>
    <scope>X-RAY CRYSTALLOGRAPHY (1.50 ANGSTROMS) OF 299-407</scope>
    <scope>DISULFIDE BONDS</scope>
    <scope>SUBUNIT</scope>
</reference>
<reference evidence="11 12" key="5">
    <citation type="journal article" date="2017" name="BMC Biol.">
        <title>Structural basis for potency differences between GDF8 and GDF11.</title>
        <authorList>
            <person name="Walker R.G."/>
            <person name="Czepnik M."/>
            <person name="Goebel E.J."/>
            <person name="McCoy J.C."/>
            <person name="Vujic A."/>
            <person name="Cho M."/>
            <person name="Oh J."/>
            <person name="Aykul S."/>
            <person name="Walton K.L."/>
            <person name="Schang G."/>
            <person name="Bernard D.J."/>
            <person name="Hinck A.P."/>
            <person name="Harrison C.A."/>
            <person name="Martinez-Hackert E."/>
            <person name="Wagers A.J."/>
            <person name="Lee R.T."/>
            <person name="Thompson T.B."/>
        </authorList>
    </citation>
    <scope>X-RAY CRYSTALLOGRAPHY (1.90 ANGSTROMS) OF 299-407 IN COMPLEX WITH FST</scope>
    <scope>DISULFIDE BONDS</scope>
    <scope>FUNCTION</scope>
</reference>
<proteinExistence type="evidence at protein level"/>